<keyword id="KW-0627">Porphyrin biosynthesis</keyword>
<keyword id="KW-0808">Transferase</keyword>
<reference key="1">
    <citation type="submission" date="2008-10" db="EMBL/GenBank/DDBJ databases">
        <title>The complete genome sequence of Helicobacter pylori strain P12.</title>
        <authorList>
            <person name="Fischer W."/>
            <person name="Windhager L."/>
            <person name="Karnholz A."/>
            <person name="Zeiller M."/>
            <person name="Zimmer R."/>
            <person name="Haas R."/>
        </authorList>
    </citation>
    <scope>NUCLEOTIDE SEQUENCE [LARGE SCALE GENOMIC DNA]</scope>
    <source>
        <strain>P12</strain>
    </source>
</reference>
<gene>
    <name evidence="1" type="primary">hemC</name>
    <name type="ordered locus">HPP12_0237</name>
</gene>
<organism>
    <name type="scientific">Helicobacter pylori (strain P12)</name>
    <dbReference type="NCBI Taxonomy" id="570508"/>
    <lineage>
        <taxon>Bacteria</taxon>
        <taxon>Pseudomonadati</taxon>
        <taxon>Campylobacterota</taxon>
        <taxon>Epsilonproteobacteria</taxon>
        <taxon>Campylobacterales</taxon>
        <taxon>Helicobacteraceae</taxon>
        <taxon>Helicobacter</taxon>
    </lineage>
</organism>
<dbReference type="EC" id="2.5.1.61" evidence="1"/>
<dbReference type="EMBL" id="CP001217">
    <property type="protein sequence ID" value="ACJ07396.1"/>
    <property type="molecule type" value="Genomic_DNA"/>
</dbReference>
<dbReference type="SMR" id="B6JKG8"/>
<dbReference type="KEGG" id="hpp:HPP12_0237"/>
<dbReference type="HOGENOM" id="CLU_019704_0_2_7"/>
<dbReference type="UniPathway" id="UPA00251">
    <property type="reaction ID" value="UER00319"/>
</dbReference>
<dbReference type="Proteomes" id="UP000008198">
    <property type="component" value="Chromosome"/>
</dbReference>
<dbReference type="GO" id="GO:0005737">
    <property type="term" value="C:cytoplasm"/>
    <property type="evidence" value="ECO:0007669"/>
    <property type="project" value="TreeGrafter"/>
</dbReference>
<dbReference type="GO" id="GO:0004418">
    <property type="term" value="F:hydroxymethylbilane synthase activity"/>
    <property type="evidence" value="ECO:0007669"/>
    <property type="project" value="UniProtKB-UniRule"/>
</dbReference>
<dbReference type="GO" id="GO:0006782">
    <property type="term" value="P:protoporphyrinogen IX biosynthetic process"/>
    <property type="evidence" value="ECO:0007669"/>
    <property type="project" value="UniProtKB-UniRule"/>
</dbReference>
<dbReference type="CDD" id="cd13646">
    <property type="entry name" value="PBP2_EcHMBS_like"/>
    <property type="match status" value="1"/>
</dbReference>
<dbReference type="FunFam" id="3.40.190.10:FF:000004">
    <property type="entry name" value="Porphobilinogen deaminase"/>
    <property type="match status" value="1"/>
</dbReference>
<dbReference type="FunFam" id="3.40.190.10:FF:000005">
    <property type="entry name" value="Porphobilinogen deaminase"/>
    <property type="match status" value="1"/>
</dbReference>
<dbReference type="Gene3D" id="3.40.190.10">
    <property type="entry name" value="Periplasmic binding protein-like II"/>
    <property type="match status" value="2"/>
</dbReference>
<dbReference type="Gene3D" id="3.30.160.40">
    <property type="entry name" value="Porphobilinogen deaminase, C-terminal domain"/>
    <property type="match status" value="1"/>
</dbReference>
<dbReference type="HAMAP" id="MF_00260">
    <property type="entry name" value="Porphobil_deam"/>
    <property type="match status" value="1"/>
</dbReference>
<dbReference type="InterPro" id="IPR000860">
    <property type="entry name" value="HemC"/>
</dbReference>
<dbReference type="InterPro" id="IPR022419">
    <property type="entry name" value="Porphobilin_deaminase_cofac_BS"/>
</dbReference>
<dbReference type="InterPro" id="IPR022417">
    <property type="entry name" value="Porphobilin_deaminase_N"/>
</dbReference>
<dbReference type="InterPro" id="IPR022418">
    <property type="entry name" value="Porphobilinogen_deaminase_C"/>
</dbReference>
<dbReference type="InterPro" id="IPR036803">
    <property type="entry name" value="Porphobilinogen_deaminase_C_sf"/>
</dbReference>
<dbReference type="NCBIfam" id="TIGR00212">
    <property type="entry name" value="hemC"/>
    <property type="match status" value="1"/>
</dbReference>
<dbReference type="PANTHER" id="PTHR11557">
    <property type="entry name" value="PORPHOBILINOGEN DEAMINASE"/>
    <property type="match status" value="1"/>
</dbReference>
<dbReference type="PANTHER" id="PTHR11557:SF0">
    <property type="entry name" value="PORPHOBILINOGEN DEAMINASE"/>
    <property type="match status" value="1"/>
</dbReference>
<dbReference type="Pfam" id="PF01379">
    <property type="entry name" value="Porphobil_deam"/>
    <property type="match status" value="1"/>
</dbReference>
<dbReference type="Pfam" id="PF03900">
    <property type="entry name" value="Porphobil_deamC"/>
    <property type="match status" value="1"/>
</dbReference>
<dbReference type="PIRSF" id="PIRSF001438">
    <property type="entry name" value="4pyrrol_synth_OHMeBilane_synth"/>
    <property type="match status" value="1"/>
</dbReference>
<dbReference type="PRINTS" id="PR00151">
    <property type="entry name" value="PORPHBDMNASE"/>
</dbReference>
<dbReference type="SUPFAM" id="SSF53850">
    <property type="entry name" value="Periplasmic binding protein-like II"/>
    <property type="match status" value="1"/>
</dbReference>
<dbReference type="SUPFAM" id="SSF54782">
    <property type="entry name" value="Porphobilinogen deaminase (hydroxymethylbilane synthase), C-terminal domain"/>
    <property type="match status" value="1"/>
</dbReference>
<dbReference type="PROSITE" id="PS00533">
    <property type="entry name" value="PORPHOBILINOGEN_DEAM"/>
    <property type="match status" value="1"/>
</dbReference>
<proteinExistence type="inferred from homology"/>
<name>HEM3_HELP2</name>
<evidence type="ECO:0000255" key="1">
    <source>
        <dbReference type="HAMAP-Rule" id="MF_00260"/>
    </source>
</evidence>
<accession>B6JKG8</accession>
<feature type="chain" id="PRO_1000114157" description="Porphobilinogen deaminase">
    <location>
        <begin position="1"/>
        <end position="306"/>
    </location>
</feature>
<feature type="modified residue" description="S-(dipyrrolylmethanemethyl)cysteine" evidence="1">
    <location>
        <position position="239"/>
    </location>
</feature>
<sequence>MGNLVIGSRGSELALWQANHIKERLKKECLIESEIQIVKTKGDKILDTPLNKIGGKGLFTKELEELLLKGTIDLAVHSLKDVPVVFEKGLDLACITKRADVRDTFLSVKFPDLMSLPKGAKVGTTSLRRSMQLKLKRQDLDTESLRGNVQTRLKKLECGEFDAIILAEAGLCRLEIQGAKYRKAFSVKEMIPSMGQGALGVEMLKNHKHFATLQKLNDEKSAFCCRLEREFIKGLNGGCQIPIGVHASLMGDRVKIQAVLGLPNGKEVITKEKRGDKTKAFDLVQELLEEFLQSGAKEILEKAQLF</sequence>
<protein>
    <recommendedName>
        <fullName evidence="1">Porphobilinogen deaminase</fullName>
        <shortName evidence="1">PBG</shortName>
        <ecNumber evidence="1">2.5.1.61</ecNumber>
    </recommendedName>
    <alternativeName>
        <fullName evidence="1">Hydroxymethylbilane synthase</fullName>
        <shortName evidence="1">HMBS</shortName>
    </alternativeName>
    <alternativeName>
        <fullName evidence="1">Pre-uroporphyrinogen synthase</fullName>
    </alternativeName>
</protein>
<comment type="function">
    <text evidence="1">Tetrapolymerization of the monopyrrole PBG into the hydroxymethylbilane pre-uroporphyrinogen in several discrete steps.</text>
</comment>
<comment type="catalytic activity">
    <reaction evidence="1">
        <text>4 porphobilinogen + H2O = hydroxymethylbilane + 4 NH4(+)</text>
        <dbReference type="Rhea" id="RHEA:13185"/>
        <dbReference type="ChEBI" id="CHEBI:15377"/>
        <dbReference type="ChEBI" id="CHEBI:28938"/>
        <dbReference type="ChEBI" id="CHEBI:57845"/>
        <dbReference type="ChEBI" id="CHEBI:58126"/>
        <dbReference type="EC" id="2.5.1.61"/>
    </reaction>
</comment>
<comment type="cofactor">
    <cofactor evidence="1">
        <name>dipyrromethane</name>
        <dbReference type="ChEBI" id="CHEBI:60342"/>
    </cofactor>
    <text evidence="1">Binds 1 dipyrromethane group covalently.</text>
</comment>
<comment type="pathway">
    <text evidence="1">Porphyrin-containing compound metabolism; protoporphyrin-IX biosynthesis; coproporphyrinogen-III from 5-aminolevulinate: step 2/4.</text>
</comment>
<comment type="subunit">
    <text evidence="1">Monomer.</text>
</comment>
<comment type="miscellaneous">
    <text evidence="1">The porphobilinogen subunits are added to the dipyrromethane group.</text>
</comment>
<comment type="similarity">
    <text evidence="1">Belongs to the HMBS family.</text>
</comment>